<protein>
    <recommendedName>
        <fullName>PDZ and LIM domain protein 3</fullName>
    </recommendedName>
    <alternativeName>
        <fullName>Actinin-associated LIM protein</fullName>
    </alternativeName>
    <alternativeName>
        <fullName>Alpha-actinin-2-associated LIM protein</fullName>
    </alternativeName>
</protein>
<accession>O70209</accession>
<name>PDLI3_MOUSE</name>
<dbReference type="EMBL" id="AF002283">
    <property type="protein sequence ID" value="AAC16673.1"/>
    <property type="molecule type" value="mRNA"/>
</dbReference>
<dbReference type="EMBL" id="AK078421">
    <property type="protein sequence ID" value="BAC37266.1"/>
    <property type="molecule type" value="mRNA"/>
</dbReference>
<dbReference type="EMBL" id="BC070418">
    <property type="protein sequence ID" value="AAH70418.1"/>
    <property type="molecule type" value="mRNA"/>
</dbReference>
<dbReference type="CCDS" id="CCDS22281.1"/>
<dbReference type="RefSeq" id="NP_058078.1">
    <property type="nucleotide sequence ID" value="NM_016798.5"/>
</dbReference>
<dbReference type="PDB" id="1V5L">
    <property type="method" value="NMR"/>
    <property type="chains" value="A=4-93"/>
</dbReference>
<dbReference type="PDB" id="1X64">
    <property type="method" value="NMR"/>
    <property type="chains" value="A=226-301"/>
</dbReference>
<dbReference type="PDBsum" id="1V5L"/>
<dbReference type="PDBsum" id="1X64"/>
<dbReference type="SMR" id="O70209"/>
<dbReference type="FunCoup" id="O70209">
    <property type="interactions" value="86"/>
</dbReference>
<dbReference type="STRING" id="10090.ENSMUSP00000034053"/>
<dbReference type="GlyGen" id="O70209">
    <property type="glycosylation" value="1 site"/>
</dbReference>
<dbReference type="iPTMnet" id="O70209"/>
<dbReference type="PhosphoSitePlus" id="O70209"/>
<dbReference type="REPRODUCTION-2DPAGE" id="IPI00116347"/>
<dbReference type="jPOST" id="O70209"/>
<dbReference type="PaxDb" id="10090-ENSMUSP00000034053"/>
<dbReference type="PeptideAtlas" id="O70209"/>
<dbReference type="ProteomicsDB" id="289337"/>
<dbReference type="Antibodypedia" id="1500">
    <property type="antibodies" value="181 antibodies from 24 providers"/>
</dbReference>
<dbReference type="DNASU" id="53318"/>
<dbReference type="Ensembl" id="ENSMUST00000034053.7">
    <property type="protein sequence ID" value="ENSMUSP00000034053.6"/>
    <property type="gene ID" value="ENSMUSG00000031636.8"/>
</dbReference>
<dbReference type="GeneID" id="53318"/>
<dbReference type="KEGG" id="mmu:53318"/>
<dbReference type="UCSC" id="uc009lpl.1">
    <property type="organism name" value="mouse"/>
</dbReference>
<dbReference type="AGR" id="MGI:1859274"/>
<dbReference type="CTD" id="27295"/>
<dbReference type="MGI" id="MGI:1859274">
    <property type="gene designation" value="Pdlim3"/>
</dbReference>
<dbReference type="VEuPathDB" id="HostDB:ENSMUSG00000031636"/>
<dbReference type="eggNOG" id="KOG1703">
    <property type="taxonomic scope" value="Eukaryota"/>
</dbReference>
<dbReference type="GeneTree" id="ENSGT00940000156741"/>
<dbReference type="HOGENOM" id="CLU_038114_1_1_1"/>
<dbReference type="InParanoid" id="O70209"/>
<dbReference type="PhylomeDB" id="O70209"/>
<dbReference type="TreeFam" id="TF106408"/>
<dbReference type="BioGRID-ORCS" id="53318">
    <property type="hits" value="2 hits in 77 CRISPR screens"/>
</dbReference>
<dbReference type="ChiTaRS" id="Pdlim3">
    <property type="organism name" value="mouse"/>
</dbReference>
<dbReference type="EvolutionaryTrace" id="O70209"/>
<dbReference type="PRO" id="PR:O70209"/>
<dbReference type="Proteomes" id="UP000000589">
    <property type="component" value="Chromosome 8"/>
</dbReference>
<dbReference type="RNAct" id="O70209">
    <property type="molecule type" value="protein"/>
</dbReference>
<dbReference type="Bgee" id="ENSMUSG00000031636">
    <property type="expression patterns" value="Expressed in tarsal region and 171 other cell types or tissues"/>
</dbReference>
<dbReference type="ExpressionAtlas" id="O70209">
    <property type="expression patterns" value="baseline and differential"/>
</dbReference>
<dbReference type="GO" id="GO:0015629">
    <property type="term" value="C:actin cytoskeleton"/>
    <property type="evidence" value="ECO:0000353"/>
    <property type="project" value="MGI"/>
</dbReference>
<dbReference type="GO" id="GO:0005829">
    <property type="term" value="C:cytosol"/>
    <property type="evidence" value="ECO:0007669"/>
    <property type="project" value="Ensembl"/>
</dbReference>
<dbReference type="GO" id="GO:0030018">
    <property type="term" value="C:Z disc"/>
    <property type="evidence" value="ECO:0000304"/>
    <property type="project" value="MGI"/>
</dbReference>
<dbReference type="GO" id="GO:0008092">
    <property type="term" value="F:cytoskeletal protein binding"/>
    <property type="evidence" value="ECO:0000353"/>
    <property type="project" value="MGI"/>
</dbReference>
<dbReference type="GO" id="GO:0046872">
    <property type="term" value="F:metal ion binding"/>
    <property type="evidence" value="ECO:0007669"/>
    <property type="project" value="UniProtKB-KW"/>
</dbReference>
<dbReference type="GO" id="GO:0008307">
    <property type="term" value="F:structural constituent of muscle"/>
    <property type="evidence" value="ECO:0000314"/>
    <property type="project" value="MGI"/>
</dbReference>
<dbReference type="GO" id="GO:0007015">
    <property type="term" value="P:actin filament organization"/>
    <property type="evidence" value="ECO:0000314"/>
    <property type="project" value="MGI"/>
</dbReference>
<dbReference type="GO" id="GO:0007507">
    <property type="term" value="P:heart development"/>
    <property type="evidence" value="ECO:0000315"/>
    <property type="project" value="MGI"/>
</dbReference>
<dbReference type="CDD" id="cd09450">
    <property type="entry name" value="LIM_ALP"/>
    <property type="match status" value="1"/>
</dbReference>
<dbReference type="CDD" id="cd06753">
    <property type="entry name" value="PDZ_PDLIM-like"/>
    <property type="match status" value="1"/>
</dbReference>
<dbReference type="FunFam" id="2.10.110.10:FF:000026">
    <property type="entry name" value="PDZ and LIM domain protein 3"/>
    <property type="match status" value="1"/>
</dbReference>
<dbReference type="FunFam" id="2.30.42.10:FF:000055">
    <property type="entry name" value="PDZ and LIM domain protein 3"/>
    <property type="match status" value="1"/>
</dbReference>
<dbReference type="Gene3D" id="2.30.42.10">
    <property type="match status" value="1"/>
</dbReference>
<dbReference type="Gene3D" id="2.10.110.10">
    <property type="entry name" value="Cysteine Rich Protein"/>
    <property type="match status" value="1"/>
</dbReference>
<dbReference type="InterPro" id="IPR031847">
    <property type="entry name" value="PDLI1-4/Zasp-like_mid"/>
</dbReference>
<dbReference type="InterPro" id="IPR001478">
    <property type="entry name" value="PDZ"/>
</dbReference>
<dbReference type="InterPro" id="IPR050604">
    <property type="entry name" value="PDZ-LIM_domain"/>
</dbReference>
<dbReference type="InterPro" id="IPR036034">
    <property type="entry name" value="PDZ_sf"/>
</dbReference>
<dbReference type="InterPro" id="IPR006643">
    <property type="entry name" value="Zasp-like_motif"/>
</dbReference>
<dbReference type="InterPro" id="IPR001781">
    <property type="entry name" value="Znf_LIM"/>
</dbReference>
<dbReference type="PANTHER" id="PTHR24214:SF7">
    <property type="entry name" value="PDZ AND LIM DOMAIN PROTEIN 3"/>
    <property type="match status" value="1"/>
</dbReference>
<dbReference type="PANTHER" id="PTHR24214">
    <property type="entry name" value="PDZ AND LIM DOMAIN PROTEIN ZASP"/>
    <property type="match status" value="1"/>
</dbReference>
<dbReference type="Pfam" id="PF15936">
    <property type="entry name" value="DUF4749"/>
    <property type="match status" value="1"/>
</dbReference>
<dbReference type="Pfam" id="PF00412">
    <property type="entry name" value="LIM"/>
    <property type="match status" value="1"/>
</dbReference>
<dbReference type="Pfam" id="PF00595">
    <property type="entry name" value="PDZ"/>
    <property type="match status" value="1"/>
</dbReference>
<dbReference type="SMART" id="SM00132">
    <property type="entry name" value="LIM"/>
    <property type="match status" value="1"/>
</dbReference>
<dbReference type="SMART" id="SM00228">
    <property type="entry name" value="PDZ"/>
    <property type="match status" value="1"/>
</dbReference>
<dbReference type="SMART" id="SM00735">
    <property type="entry name" value="ZM"/>
    <property type="match status" value="1"/>
</dbReference>
<dbReference type="SUPFAM" id="SSF57716">
    <property type="entry name" value="Glucocorticoid receptor-like (DNA-binding domain)"/>
    <property type="match status" value="2"/>
</dbReference>
<dbReference type="SUPFAM" id="SSF50156">
    <property type="entry name" value="PDZ domain-like"/>
    <property type="match status" value="1"/>
</dbReference>
<dbReference type="PROSITE" id="PS00478">
    <property type="entry name" value="LIM_DOMAIN_1"/>
    <property type="match status" value="1"/>
</dbReference>
<dbReference type="PROSITE" id="PS50023">
    <property type="entry name" value="LIM_DOMAIN_2"/>
    <property type="match status" value="1"/>
</dbReference>
<dbReference type="PROSITE" id="PS50106">
    <property type="entry name" value="PDZ"/>
    <property type="match status" value="1"/>
</dbReference>
<gene>
    <name type="primary">Pdlim3</name>
</gene>
<feature type="chain" id="PRO_0000075868" description="PDZ and LIM domain protein 3">
    <location>
        <begin position="1"/>
        <end position="316"/>
    </location>
</feature>
<feature type="domain" description="PDZ" evidence="5">
    <location>
        <begin position="1"/>
        <end position="84"/>
    </location>
</feature>
<feature type="domain" description="LIM zinc-binding" evidence="4">
    <location>
        <begin position="244"/>
        <end position="303"/>
    </location>
</feature>
<feature type="modified residue" description="Phosphoserine" evidence="3">
    <location>
        <position position="18"/>
    </location>
</feature>
<feature type="modified residue" description="Phosphoserine" evidence="2">
    <location>
        <position position="93"/>
    </location>
</feature>
<feature type="modified residue" description="Omega-N-methylarginine" evidence="8">
    <location>
        <position position="164"/>
    </location>
</feature>
<feature type="strand" evidence="9">
    <location>
        <begin position="6"/>
        <end position="11"/>
    </location>
</feature>
<feature type="strand" evidence="9">
    <location>
        <begin position="18"/>
        <end position="20"/>
    </location>
</feature>
<feature type="turn" evidence="9">
    <location>
        <begin position="21"/>
        <end position="24"/>
    </location>
</feature>
<feature type="strand" evidence="9">
    <location>
        <begin position="25"/>
        <end position="28"/>
    </location>
</feature>
<feature type="strand" evidence="9">
    <location>
        <begin position="34"/>
        <end position="36"/>
    </location>
</feature>
<feature type="helix" evidence="9">
    <location>
        <begin position="39"/>
        <end position="41"/>
    </location>
</feature>
<feature type="strand" evidence="9">
    <location>
        <begin position="48"/>
        <end position="52"/>
    </location>
</feature>
<feature type="helix" evidence="9">
    <location>
        <begin position="62"/>
        <end position="69"/>
    </location>
</feature>
<feature type="strand" evidence="9">
    <location>
        <begin position="74"/>
        <end position="77"/>
    </location>
</feature>
<feature type="turn" evidence="9">
    <location>
        <begin position="84"/>
        <end position="87"/>
    </location>
</feature>
<feature type="turn" evidence="10">
    <location>
        <begin position="247"/>
        <end position="249"/>
    </location>
</feature>
<feature type="strand" evidence="10">
    <location>
        <begin position="258"/>
        <end position="262"/>
    </location>
</feature>
<feature type="turn" evidence="10">
    <location>
        <begin position="267"/>
        <end position="269"/>
    </location>
</feature>
<feature type="strand" evidence="10">
    <location>
        <begin position="273"/>
        <end position="275"/>
    </location>
</feature>
<feature type="turn" evidence="10">
    <location>
        <begin position="279"/>
        <end position="281"/>
    </location>
</feature>
<feature type="strand" evidence="10">
    <location>
        <begin position="285"/>
        <end position="287"/>
    </location>
</feature>
<feature type="strand" evidence="10">
    <location>
        <begin position="290"/>
        <end position="292"/>
    </location>
</feature>
<feature type="helix" evidence="10">
    <location>
        <begin position="294"/>
        <end position="300"/>
    </location>
</feature>
<reference key="1">
    <citation type="journal article" date="1997" name="J. Cell Biol.">
        <title>Actinin-associated LIM protein: identification of a domain interaction between PDZ and spectrin-like repeat motifs.</title>
        <authorList>
            <person name="Xia H."/>
            <person name="Winokur S.T."/>
            <person name="Kuo W.-L."/>
            <person name="Altherr M.R."/>
            <person name="Bredt D.S."/>
        </authorList>
    </citation>
    <scope>NUCLEOTIDE SEQUENCE [MRNA]</scope>
    <scope>DEVELOPMENTAL STAGE</scope>
    <source>
        <tissue>Skeletal muscle</tissue>
    </source>
</reference>
<reference key="2">
    <citation type="journal article" date="2005" name="Science">
        <title>The transcriptional landscape of the mammalian genome.</title>
        <authorList>
            <person name="Carninci P."/>
            <person name="Kasukawa T."/>
            <person name="Katayama S."/>
            <person name="Gough J."/>
            <person name="Frith M.C."/>
            <person name="Maeda N."/>
            <person name="Oyama R."/>
            <person name="Ravasi T."/>
            <person name="Lenhard B."/>
            <person name="Wells C."/>
            <person name="Kodzius R."/>
            <person name="Shimokawa K."/>
            <person name="Bajic V.B."/>
            <person name="Brenner S.E."/>
            <person name="Batalov S."/>
            <person name="Forrest A.R."/>
            <person name="Zavolan M."/>
            <person name="Davis M.J."/>
            <person name="Wilming L.G."/>
            <person name="Aidinis V."/>
            <person name="Allen J.E."/>
            <person name="Ambesi-Impiombato A."/>
            <person name="Apweiler R."/>
            <person name="Aturaliya R.N."/>
            <person name="Bailey T.L."/>
            <person name="Bansal M."/>
            <person name="Baxter L."/>
            <person name="Beisel K.W."/>
            <person name="Bersano T."/>
            <person name="Bono H."/>
            <person name="Chalk A.M."/>
            <person name="Chiu K.P."/>
            <person name="Choudhary V."/>
            <person name="Christoffels A."/>
            <person name="Clutterbuck D.R."/>
            <person name="Crowe M.L."/>
            <person name="Dalla E."/>
            <person name="Dalrymple B.P."/>
            <person name="de Bono B."/>
            <person name="Della Gatta G."/>
            <person name="di Bernardo D."/>
            <person name="Down T."/>
            <person name="Engstrom P."/>
            <person name="Fagiolini M."/>
            <person name="Faulkner G."/>
            <person name="Fletcher C.F."/>
            <person name="Fukushima T."/>
            <person name="Furuno M."/>
            <person name="Futaki S."/>
            <person name="Gariboldi M."/>
            <person name="Georgii-Hemming P."/>
            <person name="Gingeras T.R."/>
            <person name="Gojobori T."/>
            <person name="Green R.E."/>
            <person name="Gustincich S."/>
            <person name="Harbers M."/>
            <person name="Hayashi Y."/>
            <person name="Hensch T.K."/>
            <person name="Hirokawa N."/>
            <person name="Hill D."/>
            <person name="Huminiecki L."/>
            <person name="Iacono M."/>
            <person name="Ikeo K."/>
            <person name="Iwama A."/>
            <person name="Ishikawa T."/>
            <person name="Jakt M."/>
            <person name="Kanapin A."/>
            <person name="Katoh M."/>
            <person name="Kawasawa Y."/>
            <person name="Kelso J."/>
            <person name="Kitamura H."/>
            <person name="Kitano H."/>
            <person name="Kollias G."/>
            <person name="Krishnan S.P."/>
            <person name="Kruger A."/>
            <person name="Kummerfeld S.K."/>
            <person name="Kurochkin I.V."/>
            <person name="Lareau L.F."/>
            <person name="Lazarevic D."/>
            <person name="Lipovich L."/>
            <person name="Liu J."/>
            <person name="Liuni S."/>
            <person name="McWilliam S."/>
            <person name="Madan Babu M."/>
            <person name="Madera M."/>
            <person name="Marchionni L."/>
            <person name="Matsuda H."/>
            <person name="Matsuzawa S."/>
            <person name="Miki H."/>
            <person name="Mignone F."/>
            <person name="Miyake S."/>
            <person name="Morris K."/>
            <person name="Mottagui-Tabar S."/>
            <person name="Mulder N."/>
            <person name="Nakano N."/>
            <person name="Nakauchi H."/>
            <person name="Ng P."/>
            <person name="Nilsson R."/>
            <person name="Nishiguchi S."/>
            <person name="Nishikawa S."/>
            <person name="Nori F."/>
            <person name="Ohara O."/>
            <person name="Okazaki Y."/>
            <person name="Orlando V."/>
            <person name="Pang K.C."/>
            <person name="Pavan W.J."/>
            <person name="Pavesi G."/>
            <person name="Pesole G."/>
            <person name="Petrovsky N."/>
            <person name="Piazza S."/>
            <person name="Reed J."/>
            <person name="Reid J.F."/>
            <person name="Ring B.Z."/>
            <person name="Ringwald M."/>
            <person name="Rost B."/>
            <person name="Ruan Y."/>
            <person name="Salzberg S.L."/>
            <person name="Sandelin A."/>
            <person name="Schneider C."/>
            <person name="Schoenbach C."/>
            <person name="Sekiguchi K."/>
            <person name="Semple C.A."/>
            <person name="Seno S."/>
            <person name="Sessa L."/>
            <person name="Sheng Y."/>
            <person name="Shibata Y."/>
            <person name="Shimada H."/>
            <person name="Shimada K."/>
            <person name="Silva D."/>
            <person name="Sinclair B."/>
            <person name="Sperling S."/>
            <person name="Stupka E."/>
            <person name="Sugiura K."/>
            <person name="Sultana R."/>
            <person name="Takenaka Y."/>
            <person name="Taki K."/>
            <person name="Tammoja K."/>
            <person name="Tan S.L."/>
            <person name="Tang S."/>
            <person name="Taylor M.S."/>
            <person name="Tegner J."/>
            <person name="Teichmann S.A."/>
            <person name="Ueda H.R."/>
            <person name="van Nimwegen E."/>
            <person name="Verardo R."/>
            <person name="Wei C.L."/>
            <person name="Yagi K."/>
            <person name="Yamanishi H."/>
            <person name="Zabarovsky E."/>
            <person name="Zhu S."/>
            <person name="Zimmer A."/>
            <person name="Hide W."/>
            <person name="Bult C."/>
            <person name="Grimmond S.M."/>
            <person name="Teasdale R.D."/>
            <person name="Liu E.T."/>
            <person name="Brusic V."/>
            <person name="Quackenbush J."/>
            <person name="Wahlestedt C."/>
            <person name="Mattick J.S."/>
            <person name="Hume D.A."/>
            <person name="Kai C."/>
            <person name="Sasaki D."/>
            <person name="Tomaru Y."/>
            <person name="Fukuda S."/>
            <person name="Kanamori-Katayama M."/>
            <person name="Suzuki M."/>
            <person name="Aoki J."/>
            <person name="Arakawa T."/>
            <person name="Iida J."/>
            <person name="Imamura K."/>
            <person name="Itoh M."/>
            <person name="Kato T."/>
            <person name="Kawaji H."/>
            <person name="Kawagashira N."/>
            <person name="Kawashima T."/>
            <person name="Kojima M."/>
            <person name="Kondo S."/>
            <person name="Konno H."/>
            <person name="Nakano K."/>
            <person name="Ninomiya N."/>
            <person name="Nishio T."/>
            <person name="Okada M."/>
            <person name="Plessy C."/>
            <person name="Shibata K."/>
            <person name="Shiraki T."/>
            <person name="Suzuki S."/>
            <person name="Tagami M."/>
            <person name="Waki K."/>
            <person name="Watahiki A."/>
            <person name="Okamura-Oho Y."/>
            <person name="Suzuki H."/>
            <person name="Kawai J."/>
            <person name="Hayashizaki Y."/>
        </authorList>
    </citation>
    <scope>NUCLEOTIDE SEQUENCE [LARGE SCALE MRNA]</scope>
    <source>
        <strain>C57BL/6J</strain>
        <tissue>Wolffian duct</tissue>
    </source>
</reference>
<reference key="3">
    <citation type="journal article" date="2004" name="Genome Res.">
        <title>The status, quality, and expansion of the NIH full-length cDNA project: the Mammalian Gene Collection (MGC).</title>
        <authorList>
            <consortium name="The MGC Project Team"/>
        </authorList>
    </citation>
    <scope>NUCLEOTIDE SEQUENCE [LARGE SCALE MRNA]</scope>
    <source>
        <strain>C57BL/6J</strain>
        <tissue>Brain</tissue>
    </source>
</reference>
<reference key="4">
    <citation type="journal article" date="2004" name="Mol. Biol. Rep.">
        <title>The interaction of PTP-BL PDZ domains with RIL: an enigmatic role for the RIL LIM domain.</title>
        <authorList>
            <person name="van den Berk L.C."/>
            <person name="van Ham M.A."/>
            <person name="te Lindert M.M."/>
            <person name="Walma T."/>
            <person name="Aelen J."/>
            <person name="Vuister G.W."/>
            <person name="Hendriks W.J."/>
        </authorList>
    </citation>
    <scope>INTERACTION WITH PDLIM4</scope>
</reference>
<reference key="5">
    <citation type="journal article" date="2010" name="Cell">
        <title>A tissue-specific atlas of mouse protein phosphorylation and expression.</title>
        <authorList>
            <person name="Huttlin E.L."/>
            <person name="Jedrychowski M.P."/>
            <person name="Elias J.E."/>
            <person name="Goswami T."/>
            <person name="Rad R."/>
            <person name="Beausoleil S.A."/>
            <person name="Villen J."/>
            <person name="Haas W."/>
            <person name="Sowa M.E."/>
            <person name="Gygi S.P."/>
        </authorList>
    </citation>
    <scope>IDENTIFICATION BY MASS SPECTROMETRY [LARGE SCALE ANALYSIS]</scope>
    <source>
        <tissue>Brown adipose tissue</tissue>
        <tissue>Heart</tissue>
        <tissue>Lung</tissue>
        <tissue>Testis</tissue>
    </source>
</reference>
<reference key="6">
    <citation type="journal article" date="2014" name="Mol. Cell. Proteomics">
        <title>Immunoaffinity enrichment and mass spectrometry analysis of protein methylation.</title>
        <authorList>
            <person name="Guo A."/>
            <person name="Gu H."/>
            <person name="Zhou J."/>
            <person name="Mulhern D."/>
            <person name="Wang Y."/>
            <person name="Lee K.A."/>
            <person name="Yang V."/>
            <person name="Aguiar M."/>
            <person name="Kornhauser J."/>
            <person name="Jia X."/>
            <person name="Ren J."/>
            <person name="Beausoleil S.A."/>
            <person name="Silva J.C."/>
            <person name="Vemulapalli V."/>
            <person name="Bedford M.T."/>
            <person name="Comb M.J."/>
        </authorList>
    </citation>
    <scope>METHYLATION [LARGE SCALE ANALYSIS] AT ARG-164</scope>
    <scope>IDENTIFICATION BY MASS SPECTROMETRY [LARGE SCALE ANALYSIS]</scope>
    <source>
        <tissue>Brain</tissue>
        <tissue>Embryo</tissue>
    </source>
</reference>
<reference key="7">
    <citation type="submission" date="2004-05" db="PDB data bank">
        <title>Solution structure of PDZ and LIM domains of mouse alpha-actinin-2 associated LIM protein.</title>
        <authorList>
            <consortium name="RIKEN structural genomics initiative (RSGI)"/>
        </authorList>
    </citation>
    <scope>STRUCTURE BY NMR OF 4-93 AND 226-301 IN COMPLEX WITH ZINC IONS</scope>
</reference>
<proteinExistence type="evidence at protein level"/>
<evidence type="ECO:0000250" key="1"/>
<evidence type="ECO:0000250" key="2">
    <source>
        <dbReference type="UniProtKB" id="Q53GG5"/>
    </source>
</evidence>
<evidence type="ECO:0000250" key="3">
    <source>
        <dbReference type="UniProtKB" id="Q66HS7"/>
    </source>
</evidence>
<evidence type="ECO:0000255" key="4">
    <source>
        <dbReference type="PROSITE-ProRule" id="PRU00125"/>
    </source>
</evidence>
<evidence type="ECO:0000255" key="5">
    <source>
        <dbReference type="PROSITE-ProRule" id="PRU00143"/>
    </source>
</evidence>
<evidence type="ECO:0000269" key="6">
    <source>
    </source>
</evidence>
<evidence type="ECO:0000269" key="7">
    <source>
    </source>
</evidence>
<evidence type="ECO:0007744" key="8">
    <source>
    </source>
</evidence>
<evidence type="ECO:0007829" key="9">
    <source>
        <dbReference type="PDB" id="1V5L"/>
    </source>
</evidence>
<evidence type="ECO:0007829" key="10">
    <source>
        <dbReference type="PDB" id="1X64"/>
    </source>
</evidence>
<organism>
    <name type="scientific">Mus musculus</name>
    <name type="common">Mouse</name>
    <dbReference type="NCBI Taxonomy" id="10090"/>
    <lineage>
        <taxon>Eukaryota</taxon>
        <taxon>Metazoa</taxon>
        <taxon>Chordata</taxon>
        <taxon>Craniata</taxon>
        <taxon>Vertebrata</taxon>
        <taxon>Euteleostomi</taxon>
        <taxon>Mammalia</taxon>
        <taxon>Eutheria</taxon>
        <taxon>Euarchontoglires</taxon>
        <taxon>Glires</taxon>
        <taxon>Rodentia</taxon>
        <taxon>Myomorpha</taxon>
        <taxon>Muroidea</taxon>
        <taxon>Muridae</taxon>
        <taxon>Murinae</taxon>
        <taxon>Mus</taxon>
        <taxon>Mus</taxon>
    </lineage>
</organism>
<comment type="function">
    <text evidence="1">May play a role in the organization of actin filament arrays within muscle cells.</text>
</comment>
<comment type="subunit">
    <text evidence="3 6">Interacts with ACTN2 (By similarity). Forms a heterodimer with PDLIM4 (via LIM domain) (PubMed:15663004).</text>
</comment>
<comment type="subcellular location">
    <subcellularLocation>
        <location evidence="1">Cytoplasm</location>
        <location evidence="1">Myofibril</location>
        <location evidence="1">Sarcomere</location>
        <location evidence="1">Z line</location>
    </subcellularLocation>
    <text evidence="1">Localizes to myofiber Z-lines.</text>
</comment>
<comment type="developmental stage">
    <text evidence="7">At 15 dpc highly expressed in skeletal muscle and heart.</text>
</comment>
<sequence>MPQNVVLPGPAPWGFRLSGGIDFNQPLVITRITPGSKAAAANLCPGDVILAIDGFGTESMTHADAQDRIKAASYQLCLKIDRAETRLWSPQVSEDGKAHPFKINLEAEPQEFKPIGTAHNRRAQPFVAAANIDDKRQVVSASYNSPIGLYSTSNIQDALHGQLRGLIPGSLQNEPTASVPPQSDVYRMLHDNRDDPAAPRQSGSFRVLQDLVNDGPDDRPAGTRSVRAPVTKVHGGAGSAQRMPLCDKCGSGIVGAVVKARDKYRHPECFVCADCNLNLKQKGYFFVEGELYCETHARARTRPPEGYDTVTLYPKA</sequence>
<keyword id="KW-0002">3D-structure</keyword>
<keyword id="KW-0963">Cytoplasm</keyword>
<keyword id="KW-0440">LIM domain</keyword>
<keyword id="KW-0479">Metal-binding</keyword>
<keyword id="KW-0488">Methylation</keyword>
<keyword id="KW-0597">Phosphoprotein</keyword>
<keyword id="KW-1185">Reference proteome</keyword>
<keyword id="KW-0862">Zinc</keyword>